<organism>
    <name type="scientific">Staphylococcus aureus (strain COL)</name>
    <dbReference type="NCBI Taxonomy" id="93062"/>
    <lineage>
        <taxon>Bacteria</taxon>
        <taxon>Bacillati</taxon>
        <taxon>Bacillota</taxon>
        <taxon>Bacilli</taxon>
        <taxon>Bacillales</taxon>
        <taxon>Staphylococcaceae</taxon>
        <taxon>Staphylococcus</taxon>
    </lineage>
</organism>
<dbReference type="EC" id="2.7.1.197" evidence="1 2"/>
<dbReference type="EMBL" id="CP000046">
    <property type="protein sequence ID" value="AAW38454.1"/>
    <property type="molecule type" value="Genomic_DNA"/>
</dbReference>
<dbReference type="RefSeq" id="WP_000083809.1">
    <property type="nucleotide sequence ID" value="NC_002951.2"/>
</dbReference>
<dbReference type="SMR" id="Q5HE48"/>
<dbReference type="KEGG" id="sac:SACOL2146"/>
<dbReference type="HOGENOM" id="CLU_028721_2_1_9"/>
<dbReference type="Proteomes" id="UP000000530">
    <property type="component" value="Chromosome"/>
</dbReference>
<dbReference type="GO" id="GO:0005886">
    <property type="term" value="C:plasma membrane"/>
    <property type="evidence" value="ECO:0007669"/>
    <property type="project" value="UniProtKB-SubCell"/>
</dbReference>
<dbReference type="GO" id="GO:0016301">
    <property type="term" value="F:kinase activity"/>
    <property type="evidence" value="ECO:0007669"/>
    <property type="project" value="UniProtKB-KW"/>
</dbReference>
<dbReference type="GO" id="GO:0022872">
    <property type="term" value="F:protein-N(PI)-phosphohistidine-mannitol phosphotransferase system transmembrane transporter activity"/>
    <property type="evidence" value="ECO:0007669"/>
    <property type="project" value="InterPro"/>
</dbReference>
<dbReference type="GO" id="GO:0090563">
    <property type="term" value="F:protein-phosphocysteine-sugar phosphotransferase activity"/>
    <property type="evidence" value="ECO:0007669"/>
    <property type="project" value="TreeGrafter"/>
</dbReference>
<dbReference type="GO" id="GO:0009401">
    <property type="term" value="P:phosphoenolpyruvate-dependent sugar phosphotransferase system"/>
    <property type="evidence" value="ECO:0007669"/>
    <property type="project" value="UniProtKB-KW"/>
</dbReference>
<dbReference type="CDD" id="cd05567">
    <property type="entry name" value="PTS_IIB_mannitol"/>
    <property type="match status" value="1"/>
</dbReference>
<dbReference type="FunFam" id="3.40.50.2300:FF:000047">
    <property type="entry name" value="PTS system mannitol-specific transporter subunit IICBA"/>
    <property type="match status" value="1"/>
</dbReference>
<dbReference type="Gene3D" id="3.40.50.2300">
    <property type="match status" value="1"/>
</dbReference>
<dbReference type="InterPro" id="IPR036095">
    <property type="entry name" value="PTS_EIIB-like_sf"/>
</dbReference>
<dbReference type="InterPro" id="IPR013011">
    <property type="entry name" value="PTS_EIIB_2"/>
</dbReference>
<dbReference type="InterPro" id="IPR003501">
    <property type="entry name" value="PTS_EIIB_2/3"/>
</dbReference>
<dbReference type="InterPro" id="IPR029503">
    <property type="entry name" value="PTS_EIIB_mannitol"/>
</dbReference>
<dbReference type="InterPro" id="IPR003352">
    <property type="entry name" value="PTS_EIIC"/>
</dbReference>
<dbReference type="InterPro" id="IPR013014">
    <property type="entry name" value="PTS_EIIC_2"/>
</dbReference>
<dbReference type="InterPro" id="IPR004718">
    <property type="entry name" value="PTS_IIC_mtl"/>
</dbReference>
<dbReference type="InterPro" id="IPR050893">
    <property type="entry name" value="Sugar_PTS"/>
</dbReference>
<dbReference type="NCBIfam" id="TIGR00851">
    <property type="entry name" value="mtlA"/>
    <property type="match status" value="1"/>
</dbReference>
<dbReference type="PANTHER" id="PTHR30181">
    <property type="entry name" value="MANNITOL PERMEASE IIC COMPONENT"/>
    <property type="match status" value="1"/>
</dbReference>
<dbReference type="PANTHER" id="PTHR30181:SF2">
    <property type="entry name" value="PTS SYSTEM MANNITOL-SPECIFIC EIICBA COMPONENT"/>
    <property type="match status" value="1"/>
</dbReference>
<dbReference type="Pfam" id="PF02378">
    <property type="entry name" value="PTS_EIIC"/>
    <property type="match status" value="1"/>
</dbReference>
<dbReference type="Pfam" id="PF02302">
    <property type="entry name" value="PTS_IIB"/>
    <property type="match status" value="1"/>
</dbReference>
<dbReference type="SUPFAM" id="SSF52794">
    <property type="entry name" value="PTS system IIB component-like"/>
    <property type="match status" value="1"/>
</dbReference>
<dbReference type="PROSITE" id="PS51099">
    <property type="entry name" value="PTS_EIIB_TYPE_2"/>
    <property type="match status" value="1"/>
</dbReference>
<dbReference type="PROSITE" id="PS51104">
    <property type="entry name" value="PTS_EIIC_TYPE_2"/>
    <property type="match status" value="1"/>
</dbReference>
<accession>Q5HE48</accession>
<reference key="1">
    <citation type="journal article" date="2005" name="J. Bacteriol.">
        <title>Insights on evolution of virulence and resistance from the complete genome analysis of an early methicillin-resistant Staphylococcus aureus strain and a biofilm-producing methicillin-resistant Staphylococcus epidermidis strain.</title>
        <authorList>
            <person name="Gill S.R."/>
            <person name="Fouts D.E."/>
            <person name="Archer G.L."/>
            <person name="Mongodin E.F."/>
            <person name="DeBoy R.T."/>
            <person name="Ravel J."/>
            <person name="Paulsen I.T."/>
            <person name="Kolonay J.F."/>
            <person name="Brinkac L.M."/>
            <person name="Beanan M.J."/>
            <person name="Dodson R.J."/>
            <person name="Daugherty S.C."/>
            <person name="Madupu R."/>
            <person name="Angiuoli S.V."/>
            <person name="Durkin A.S."/>
            <person name="Haft D.H."/>
            <person name="Vamathevan J.J."/>
            <person name="Khouri H."/>
            <person name="Utterback T.R."/>
            <person name="Lee C."/>
            <person name="Dimitrov G."/>
            <person name="Jiang L."/>
            <person name="Qin H."/>
            <person name="Weidman J."/>
            <person name="Tran K."/>
            <person name="Kang K.H."/>
            <person name="Hance I.R."/>
            <person name="Nelson K.E."/>
            <person name="Fraser C.M."/>
        </authorList>
    </citation>
    <scope>NUCLEOTIDE SEQUENCE [LARGE SCALE GENOMIC DNA]</scope>
    <source>
        <strain>COL</strain>
    </source>
</reference>
<feature type="chain" id="PRO_0000186620" description="PTS system mannitol-specific EIICB component">
    <location>
        <begin position="1"/>
        <end position="512"/>
    </location>
</feature>
<feature type="topological domain" description="Cytoplasmic" evidence="1">
    <location>
        <begin position="1"/>
        <end position="28"/>
    </location>
</feature>
<feature type="transmembrane region" description="Helical" evidence="1">
    <location>
        <begin position="29"/>
        <end position="50"/>
    </location>
</feature>
<feature type="topological domain" description="Extracellular" evidence="1">
    <location>
        <begin position="51"/>
        <end position="54"/>
    </location>
</feature>
<feature type="transmembrane region" description="Helical" evidence="1">
    <location>
        <begin position="55"/>
        <end position="75"/>
    </location>
</feature>
<feature type="topological domain" description="Cytoplasmic" evidence="1">
    <location>
        <begin position="76"/>
        <end position="139"/>
    </location>
</feature>
<feature type="transmembrane region" description="Helical" evidence="1">
    <location>
        <begin position="140"/>
        <end position="161"/>
    </location>
</feature>
<feature type="topological domain" description="Extracellular" evidence="1">
    <location>
        <begin position="162"/>
        <end position="170"/>
    </location>
</feature>
<feature type="transmembrane region" description="Helical" evidence="1">
    <location>
        <begin position="171"/>
        <end position="191"/>
    </location>
</feature>
<feature type="topological domain" description="Cytoplasmic" evidence="1">
    <location>
        <begin position="192"/>
        <end position="278"/>
    </location>
</feature>
<feature type="transmembrane region" description="Helical" evidence="1">
    <location>
        <begin position="279"/>
        <end position="298"/>
    </location>
</feature>
<feature type="topological domain" description="Extracellular" evidence="1">
    <location>
        <begin position="299"/>
        <end position="318"/>
    </location>
</feature>
<feature type="transmembrane region" description="Helical" evidence="1">
    <location>
        <begin position="319"/>
        <end position="340"/>
    </location>
</feature>
<feature type="topological domain" description="Cytoplasmic" evidence="1">
    <location>
        <begin position="341"/>
        <end position="512"/>
    </location>
</feature>
<feature type="domain" description="PTS EIIC type-2" evidence="4">
    <location>
        <begin position="17"/>
        <end position="349"/>
    </location>
</feature>
<feature type="domain" description="PTS EIIB type-2" evidence="3">
    <location>
        <begin position="419"/>
        <end position="512"/>
    </location>
</feature>
<feature type="region of interest" description="Disordered" evidence="5">
    <location>
        <begin position="355"/>
        <end position="402"/>
    </location>
</feature>
<feature type="compositionally biased region" description="Low complexity" evidence="5">
    <location>
        <begin position="365"/>
        <end position="376"/>
    </location>
</feature>
<feature type="compositionally biased region" description="Polar residues" evidence="5">
    <location>
        <begin position="380"/>
        <end position="392"/>
    </location>
</feature>
<feature type="active site" description="Phosphocysteine intermediate; for EIIB activity" evidence="1 2">
    <location>
        <position position="425"/>
    </location>
</feature>
<feature type="modified residue" description="Phosphocysteine; by EIIA" evidence="1 2 3">
    <location>
        <position position="425"/>
    </location>
</feature>
<proteinExistence type="inferred from homology"/>
<sequence length="512" mass="55095">MSQTEEKKGIGRRVQAFGSFLSSMIMPNIGAFIAWGFIAAIFIDNGWLPNKDLATLAGPMITYLIPLLIAFSGGRLIYDLRGGIIAATATMGVIVALPDTPMLLGAMIMGPLVGWLMKKTDQLIQPRTPQGFEMLFNNFSAGILGFIMTIAGFKILAPLMKFIMHILSVAVEALVHAHLLPLVSILVEPAKIVFLNNAINHGVFTPLGADQAAKAGQSILYTIESNPGPGLGILLAYMIFGKGTAKTTSYGAGIIHFLGGIHEIYFPYVLMRPLLFIAVILGGMTGVATYQATGFGFKSPASPGSFIVYCLNAPRGEFLHMLLGVFLAALVSFVVAALIMKFTREPKQDLEAATAQMENTKGKKSSVASKLVSSDKNVNTEENASGNVSETSSSDDDPEALLDNYNTEDVDAHNYNNINHVIFACDAGMGSSAMGASMLRNKFKKAGINDITVTNTAINQLPKDAQLVITQKKLTDRAIKQTPNAIHISVDNFLNSPRYEELLNNLKKDDQA</sequence>
<protein>
    <recommendedName>
        <fullName evidence="2">PTS system mannitol-specific EIICB component</fullName>
    </recommendedName>
    <alternativeName>
        <fullName evidence="2">EIICB-Mtl</fullName>
        <shortName evidence="2">EII-Mtl</shortName>
    </alternativeName>
    <domain>
        <recommendedName>
            <fullName evidence="2">Mannitol permease IIC component</fullName>
        </recommendedName>
        <alternativeName>
            <fullName evidence="2">PTS system mannitol-specific EIIC component</fullName>
        </alternativeName>
    </domain>
    <domain>
        <recommendedName>
            <fullName evidence="2">Mannitol-specific phosphotransferase enzyme IIB component</fullName>
            <ecNumber evidence="1 2">2.7.1.197</ecNumber>
        </recommendedName>
        <alternativeName>
            <fullName evidence="2">PTS system mannitol-specific EIIB component</fullName>
        </alternativeName>
    </domain>
</protein>
<comment type="function">
    <text evidence="2">The phosphoenolpyruvate-dependent sugar phosphotransferase system (sugar PTS), a major carbohydrate active transport system, catalyzes the phosphorylation of incoming sugar substrates concomitantly with their translocation across the cell membrane. The enzyme II CmtAB PTS system is involved in D-mannitol transport.</text>
</comment>
<comment type="catalytic activity">
    <reaction evidence="1 2">
        <text>D-mannitol(out) + N(pros)-phospho-L-histidyl-[protein] = D-mannitol 1-phosphate(in) + L-histidyl-[protein]</text>
        <dbReference type="Rhea" id="RHEA:33363"/>
        <dbReference type="Rhea" id="RHEA-COMP:9745"/>
        <dbReference type="Rhea" id="RHEA-COMP:9746"/>
        <dbReference type="ChEBI" id="CHEBI:16899"/>
        <dbReference type="ChEBI" id="CHEBI:29979"/>
        <dbReference type="ChEBI" id="CHEBI:61381"/>
        <dbReference type="ChEBI" id="CHEBI:64837"/>
        <dbReference type="EC" id="2.7.1.197"/>
    </reaction>
</comment>
<comment type="subunit">
    <text evidence="2">Homodimer.</text>
</comment>
<comment type="subcellular location">
    <subcellularLocation>
        <location evidence="4">Cell membrane</location>
        <topology evidence="4">Multi-pass membrane protein</topology>
    </subcellularLocation>
</comment>
<comment type="domain">
    <text evidence="4">The EIIC type-2 domain forms the PTS system translocation channel and contains the specific substrate-binding site.</text>
</comment>
<comment type="domain">
    <text evidence="3">The PTS EIIB type-2 domain is phosphorylated by phospho-EIIA on a cysteinyl residue. Then, it transfers the phosphoryl group to the sugar substrate concomitantly with the sugar uptake processed by the PTS EIIC type-2 domain.</text>
</comment>
<keyword id="KW-1003">Cell membrane</keyword>
<keyword id="KW-0418">Kinase</keyword>
<keyword id="KW-0472">Membrane</keyword>
<keyword id="KW-0597">Phosphoprotein</keyword>
<keyword id="KW-0598">Phosphotransferase system</keyword>
<keyword id="KW-0762">Sugar transport</keyword>
<keyword id="KW-0808">Transferase</keyword>
<keyword id="KW-0812">Transmembrane</keyword>
<keyword id="KW-1133">Transmembrane helix</keyword>
<keyword id="KW-0813">Transport</keyword>
<name>PTMCB_STAAC</name>
<gene>
    <name type="primary">mtlA</name>
    <name type="ordered locus">SACOL2146</name>
</gene>
<evidence type="ECO:0000250" key="1">
    <source>
        <dbReference type="UniProtKB" id="P00550"/>
    </source>
</evidence>
<evidence type="ECO:0000250" key="2">
    <source>
        <dbReference type="UniProtKB" id="P28008"/>
    </source>
</evidence>
<evidence type="ECO:0000255" key="3">
    <source>
        <dbReference type="PROSITE-ProRule" id="PRU00422"/>
    </source>
</evidence>
<evidence type="ECO:0000255" key="4">
    <source>
        <dbReference type="PROSITE-ProRule" id="PRU00427"/>
    </source>
</evidence>
<evidence type="ECO:0000256" key="5">
    <source>
        <dbReference type="SAM" id="MobiDB-lite"/>
    </source>
</evidence>